<sequence>MVRGPAGAWAVLGPLLWGCGLALLQGGMLYPQESRSRERKELNGLWSFRADFSDNRRQGFEQQWYRKPLRESGPTLDMPVPSSFNDISQDGRLRSFIGWVWYEREAILPQRWTQDLGTRVVLRISSAHYYAIVWVNGVHVTEHEGGHLPFEADISKLVQTGPLSSCRITIAINNTLSPHTLPPGTILYKTDTSKYPKGYFVQNTNFDFFNYAGLHRPVLLYTTPTAYIDDITVTTDVDQDTGLVNYQIFVQGSDHFQLEVHLLDEEGRVVAKGTGGQGQLQVPSAHLWWPYLMHERPAYLYSLEVKLTAQTSAGPLSDFYTLPVGIRTVAVTERQFLINGKPFYFHGVNKHEDADIRGKGFDWSLLVKDFNLLRWLGANAFRTSHYPYAEEVMQLCDRYGIVVIDESPGVGIVLAQSFSNASLQHHLEVMEEMVRRDKNHPAVVMWSVANEPSSFLEQAAYYFKMLIGHTKALDPSRPVTFVTSSSYEKDLGVPYVDVICVNSYYSWYHDYGHMEVIQLQLATQFERWHEAYQKPIIQSEYGAETIIGFHEDPPLMFSEEYQKGLLQQYHVILDQKRKEYVVGELIWNFADFMTDQSPQRAIGNRKGIFTRQRQPKSAAFLLRERYWKLANETRYLQSAVMSQCVGNSPFTV</sequence>
<keyword id="KW-0325">Glycoprotein</keyword>
<keyword id="KW-0326">Glycosidase</keyword>
<keyword id="KW-0378">Hydrolase</keyword>
<keyword id="KW-0458">Lysosome</keyword>
<keyword id="KW-1185">Reference proteome</keyword>
<keyword id="KW-0732">Signal</keyword>
<gene>
    <name type="primary">GUSB</name>
</gene>
<reference key="1">
    <citation type="submission" date="2005-06" db="EMBL/GenBank/DDBJ databases">
        <authorList>
            <person name="Beck J."/>
            <person name="Knorr C."/>
            <person name="Brenig B."/>
        </authorList>
    </citation>
    <scope>NUCLEOTIDE SEQUENCE [GENOMIC DNA]</scope>
</reference>
<evidence type="ECO:0000250" key="1"/>
<evidence type="ECO:0000255" key="2"/>
<evidence type="ECO:0000305" key="3"/>
<comment type="function">
    <text evidence="1">Plays an important role in the degradation of dermatan and keratan sulfates.</text>
</comment>
<comment type="catalytic activity">
    <reaction>
        <text>a beta-D-glucuronoside + H2O = D-glucuronate + an alcohol</text>
        <dbReference type="Rhea" id="RHEA:17633"/>
        <dbReference type="ChEBI" id="CHEBI:15377"/>
        <dbReference type="ChEBI" id="CHEBI:30879"/>
        <dbReference type="ChEBI" id="CHEBI:58720"/>
        <dbReference type="ChEBI" id="CHEBI:83411"/>
        <dbReference type="EC" id="3.2.1.31"/>
    </reaction>
</comment>
<comment type="activity regulation">
    <text evidence="1">Inhibited by L-aspartic acid.</text>
</comment>
<comment type="subunit">
    <text evidence="1">Homotetramer.</text>
</comment>
<comment type="subcellular location">
    <subcellularLocation>
        <location evidence="1">Lysosome</location>
    </subcellularLocation>
</comment>
<comment type="similarity">
    <text evidence="3">Belongs to the glycosyl hydrolase 2 family.</text>
</comment>
<organism>
    <name type="scientific">Sus scrofa</name>
    <name type="common">Pig</name>
    <dbReference type="NCBI Taxonomy" id="9823"/>
    <lineage>
        <taxon>Eukaryota</taxon>
        <taxon>Metazoa</taxon>
        <taxon>Chordata</taxon>
        <taxon>Craniata</taxon>
        <taxon>Vertebrata</taxon>
        <taxon>Euteleostomi</taxon>
        <taxon>Mammalia</taxon>
        <taxon>Eutheria</taxon>
        <taxon>Laurasiatheria</taxon>
        <taxon>Artiodactyla</taxon>
        <taxon>Suina</taxon>
        <taxon>Suidae</taxon>
        <taxon>Sus</taxon>
    </lineage>
</organism>
<dbReference type="EC" id="3.2.1.31"/>
<dbReference type="EMBL" id="DQ095863">
    <property type="protein sequence ID" value="AAZ03639.1"/>
    <property type="molecule type" value="Genomic_DNA"/>
</dbReference>
<dbReference type="RefSeq" id="NP_001116593.1">
    <property type="nucleotide sequence ID" value="NM_001123121.1"/>
</dbReference>
<dbReference type="SMR" id="Q4FAT7"/>
<dbReference type="FunCoup" id="Q4FAT7">
    <property type="interactions" value="738"/>
</dbReference>
<dbReference type="STRING" id="9823.ENSSSCP00000043718"/>
<dbReference type="CAZy" id="GH2">
    <property type="family name" value="Glycoside Hydrolase Family 2"/>
</dbReference>
<dbReference type="GlyCosmos" id="Q4FAT7">
    <property type="glycosylation" value="3 sites, No reported glycans"/>
</dbReference>
<dbReference type="GlyGen" id="Q4FAT7">
    <property type="glycosylation" value="3 sites"/>
</dbReference>
<dbReference type="PaxDb" id="9823-ENSSSCP00000008265"/>
<dbReference type="PeptideAtlas" id="Q4FAT7"/>
<dbReference type="Ensembl" id="ENSSSCT00000040486.3">
    <property type="protein sequence ID" value="ENSSSCP00000043718.2"/>
    <property type="gene ID" value="ENSSSCG00000007739.5"/>
</dbReference>
<dbReference type="Ensembl" id="ENSSSCT00025089382.1">
    <property type="protein sequence ID" value="ENSSSCP00025039105.1"/>
    <property type="gene ID" value="ENSSSCG00025065003.1"/>
</dbReference>
<dbReference type="Ensembl" id="ENSSSCT00030087031.1">
    <property type="protein sequence ID" value="ENSSSCP00030040167.1"/>
    <property type="gene ID" value="ENSSSCG00030062228.1"/>
</dbReference>
<dbReference type="Ensembl" id="ENSSSCT00035058882.1">
    <property type="protein sequence ID" value="ENSSSCP00035023669.1"/>
    <property type="gene ID" value="ENSSSCG00035044326.1"/>
</dbReference>
<dbReference type="Ensembl" id="ENSSSCT00045055720.1">
    <property type="protein sequence ID" value="ENSSSCP00045038860.1"/>
    <property type="gene ID" value="ENSSSCG00045032453.1"/>
</dbReference>
<dbReference type="Ensembl" id="ENSSSCT00055056257.1">
    <property type="protein sequence ID" value="ENSSSCP00055044949.1"/>
    <property type="gene ID" value="ENSSSCG00055028361.1"/>
</dbReference>
<dbReference type="Ensembl" id="ENSSSCT00090010253">
    <property type="protein sequence ID" value="ENSSSCP00090006290"/>
    <property type="gene ID" value="ENSSSCG00090005831"/>
</dbReference>
<dbReference type="Ensembl" id="ENSSSCT00105042164">
    <property type="protein sequence ID" value="ENSSSCP00105029382"/>
    <property type="gene ID" value="ENSSSCG00105022073"/>
</dbReference>
<dbReference type="Ensembl" id="ENSSSCT00115037459">
    <property type="protein sequence ID" value="ENSSSCP00115035394"/>
    <property type="gene ID" value="ENSSSCG00115021141"/>
</dbReference>
<dbReference type="Ensembl" id="ENSSSCT00130018307">
    <property type="protein sequence ID" value="ENSSSCP00130012372"/>
    <property type="gene ID" value="ENSSSCG00130009788"/>
</dbReference>
<dbReference type="GeneID" id="100144519"/>
<dbReference type="KEGG" id="ssc:100144519"/>
<dbReference type="CTD" id="2990"/>
<dbReference type="VGNC" id="VGNC:103960">
    <property type="gene designation" value="GUSB"/>
</dbReference>
<dbReference type="eggNOG" id="KOG2024">
    <property type="taxonomic scope" value="Eukaryota"/>
</dbReference>
<dbReference type="GeneTree" id="ENSGT00390000001752"/>
<dbReference type="HOGENOM" id="CLU_006501_6_1_1"/>
<dbReference type="InParanoid" id="Q4FAT7"/>
<dbReference type="OrthoDB" id="408532at2759"/>
<dbReference type="TreeFam" id="TF300685"/>
<dbReference type="Reactome" id="R-SSC-2024096">
    <property type="pathway name" value="HS-GAG degradation"/>
</dbReference>
<dbReference type="Reactome" id="R-SSC-2160916">
    <property type="pathway name" value="Hyaluronan uptake and degradation"/>
</dbReference>
<dbReference type="Reactome" id="R-SSC-6798695">
    <property type="pathway name" value="Neutrophil degranulation"/>
</dbReference>
<dbReference type="Proteomes" id="UP000008227">
    <property type="component" value="Chromosome 3"/>
</dbReference>
<dbReference type="Proteomes" id="UP000314985">
    <property type="component" value="Unplaced"/>
</dbReference>
<dbReference type="Proteomes" id="UP000694570">
    <property type="component" value="Unplaced"/>
</dbReference>
<dbReference type="Proteomes" id="UP000694571">
    <property type="component" value="Unplaced"/>
</dbReference>
<dbReference type="Proteomes" id="UP000694720">
    <property type="component" value="Unplaced"/>
</dbReference>
<dbReference type="Proteomes" id="UP000694722">
    <property type="component" value="Unplaced"/>
</dbReference>
<dbReference type="Proteomes" id="UP000694723">
    <property type="component" value="Unplaced"/>
</dbReference>
<dbReference type="Proteomes" id="UP000694724">
    <property type="component" value="Unplaced"/>
</dbReference>
<dbReference type="Proteomes" id="UP000694725">
    <property type="component" value="Unplaced"/>
</dbReference>
<dbReference type="Proteomes" id="UP000694726">
    <property type="component" value="Unplaced"/>
</dbReference>
<dbReference type="Proteomes" id="UP000694727">
    <property type="component" value="Unplaced"/>
</dbReference>
<dbReference type="Proteomes" id="UP000694728">
    <property type="component" value="Unplaced"/>
</dbReference>
<dbReference type="Bgee" id="ENSSSCG00000007739">
    <property type="expression patterns" value="Expressed in ovary and 43 other cell types or tissues"/>
</dbReference>
<dbReference type="ExpressionAtlas" id="Q4FAT7">
    <property type="expression patterns" value="baseline and differential"/>
</dbReference>
<dbReference type="GO" id="GO:0005615">
    <property type="term" value="C:extracellular space"/>
    <property type="evidence" value="ECO:0000318"/>
    <property type="project" value="GO_Central"/>
</dbReference>
<dbReference type="GO" id="GO:0043202">
    <property type="term" value="C:lysosomal lumen"/>
    <property type="evidence" value="ECO:0007669"/>
    <property type="project" value="Ensembl"/>
</dbReference>
<dbReference type="GO" id="GO:0004566">
    <property type="term" value="F:beta-glucuronidase activity"/>
    <property type="evidence" value="ECO:0000318"/>
    <property type="project" value="GO_Central"/>
</dbReference>
<dbReference type="GO" id="GO:0030246">
    <property type="term" value="F:carbohydrate binding"/>
    <property type="evidence" value="ECO:0000318"/>
    <property type="project" value="GO_Central"/>
</dbReference>
<dbReference type="GO" id="GO:0019904">
    <property type="term" value="F:protein domain specific binding"/>
    <property type="evidence" value="ECO:0007669"/>
    <property type="project" value="Ensembl"/>
</dbReference>
<dbReference type="GO" id="GO:0005102">
    <property type="term" value="F:signaling receptor binding"/>
    <property type="evidence" value="ECO:0000318"/>
    <property type="project" value="GO_Central"/>
</dbReference>
<dbReference type="GO" id="GO:0005975">
    <property type="term" value="P:carbohydrate metabolic process"/>
    <property type="evidence" value="ECO:0007669"/>
    <property type="project" value="Ensembl"/>
</dbReference>
<dbReference type="GO" id="GO:0030207">
    <property type="term" value="P:chondroitin sulfate proteoglycan catabolic process"/>
    <property type="evidence" value="ECO:0007669"/>
    <property type="project" value="Ensembl"/>
</dbReference>
<dbReference type="GO" id="GO:0030200">
    <property type="term" value="P:heparan sulfate proteoglycan catabolic process"/>
    <property type="evidence" value="ECO:0007669"/>
    <property type="project" value="Ensembl"/>
</dbReference>
<dbReference type="GO" id="GO:0030214">
    <property type="term" value="P:hyaluronan catabolic process"/>
    <property type="evidence" value="ECO:0007669"/>
    <property type="project" value="Ensembl"/>
</dbReference>
<dbReference type="FunFam" id="2.60.120.260:FF:000027">
    <property type="entry name" value="Beta-glucuronidase"/>
    <property type="match status" value="1"/>
</dbReference>
<dbReference type="FunFam" id="2.60.40.10:FF:000628">
    <property type="entry name" value="Beta-glucuronidase"/>
    <property type="match status" value="1"/>
</dbReference>
<dbReference type="FunFam" id="3.20.20.80:FF:000029">
    <property type="entry name" value="Beta-glucuronidase"/>
    <property type="match status" value="1"/>
</dbReference>
<dbReference type="Gene3D" id="2.60.120.260">
    <property type="entry name" value="Galactose-binding domain-like"/>
    <property type="match status" value="1"/>
</dbReference>
<dbReference type="Gene3D" id="3.20.20.80">
    <property type="entry name" value="Glycosidases"/>
    <property type="match status" value="1"/>
</dbReference>
<dbReference type="Gene3D" id="2.60.40.10">
    <property type="entry name" value="Immunoglobulins"/>
    <property type="match status" value="1"/>
</dbReference>
<dbReference type="InterPro" id="IPR036156">
    <property type="entry name" value="Beta-gal/glucu_dom_sf"/>
</dbReference>
<dbReference type="InterPro" id="IPR008979">
    <property type="entry name" value="Galactose-bd-like_sf"/>
</dbReference>
<dbReference type="InterPro" id="IPR006101">
    <property type="entry name" value="Glyco_hydro_2"/>
</dbReference>
<dbReference type="InterPro" id="IPR023232">
    <property type="entry name" value="Glyco_hydro_2_AS"/>
</dbReference>
<dbReference type="InterPro" id="IPR006103">
    <property type="entry name" value="Glyco_hydro_2_cat"/>
</dbReference>
<dbReference type="InterPro" id="IPR023230">
    <property type="entry name" value="Glyco_hydro_2_CS"/>
</dbReference>
<dbReference type="InterPro" id="IPR006102">
    <property type="entry name" value="Glyco_hydro_2_Ig-like"/>
</dbReference>
<dbReference type="InterPro" id="IPR006104">
    <property type="entry name" value="Glyco_hydro_2_N"/>
</dbReference>
<dbReference type="InterPro" id="IPR017853">
    <property type="entry name" value="Glycoside_hydrolase_SF"/>
</dbReference>
<dbReference type="InterPro" id="IPR013783">
    <property type="entry name" value="Ig-like_fold"/>
</dbReference>
<dbReference type="NCBIfam" id="NF007538">
    <property type="entry name" value="PRK10150.1"/>
    <property type="match status" value="1"/>
</dbReference>
<dbReference type="PANTHER" id="PTHR10066">
    <property type="entry name" value="BETA-GLUCURONIDASE"/>
    <property type="match status" value="1"/>
</dbReference>
<dbReference type="PANTHER" id="PTHR10066:SF67">
    <property type="entry name" value="BETA-GLUCURONIDASE"/>
    <property type="match status" value="1"/>
</dbReference>
<dbReference type="Pfam" id="PF00703">
    <property type="entry name" value="Glyco_hydro_2"/>
    <property type="match status" value="1"/>
</dbReference>
<dbReference type="Pfam" id="PF02836">
    <property type="entry name" value="Glyco_hydro_2_C"/>
    <property type="match status" value="1"/>
</dbReference>
<dbReference type="Pfam" id="PF02837">
    <property type="entry name" value="Glyco_hydro_2_N"/>
    <property type="match status" value="1"/>
</dbReference>
<dbReference type="PRINTS" id="PR00132">
    <property type="entry name" value="GLHYDRLASE2"/>
</dbReference>
<dbReference type="SUPFAM" id="SSF51445">
    <property type="entry name" value="(Trans)glycosidases"/>
    <property type="match status" value="1"/>
</dbReference>
<dbReference type="SUPFAM" id="SSF49303">
    <property type="entry name" value="beta-Galactosidase/glucuronidase domain"/>
    <property type="match status" value="1"/>
</dbReference>
<dbReference type="SUPFAM" id="SSF49785">
    <property type="entry name" value="Galactose-binding domain-like"/>
    <property type="match status" value="1"/>
</dbReference>
<dbReference type="PROSITE" id="PS00719">
    <property type="entry name" value="GLYCOSYL_HYDROL_F2_1"/>
    <property type="match status" value="1"/>
</dbReference>
<dbReference type="PROSITE" id="PS00608">
    <property type="entry name" value="GLYCOSYL_HYDROL_F2_2"/>
    <property type="match status" value="1"/>
</dbReference>
<accession>Q4FAT7</accession>
<proteinExistence type="inferred from homology"/>
<name>BGLR_PIG</name>
<feature type="signal peptide" evidence="1">
    <location>
        <begin position="1"/>
        <end position="22"/>
    </location>
</feature>
<feature type="chain" id="PRO_0000231599" description="Beta-glucuronidase">
    <location>
        <begin position="23"/>
        <end position="652"/>
    </location>
</feature>
<feature type="active site" description="Proton donor" evidence="1">
    <location>
        <position position="451"/>
    </location>
</feature>
<feature type="glycosylation site" description="N-linked (GlcNAc...) asparagine" evidence="2">
    <location>
        <position position="173"/>
    </location>
</feature>
<feature type="glycosylation site" description="N-linked (GlcNAc...) asparagine" evidence="2">
    <location>
        <position position="420"/>
    </location>
</feature>
<feature type="glycosylation site" description="N-linked (GlcNAc...) asparagine" evidence="2">
    <location>
        <position position="631"/>
    </location>
</feature>
<protein>
    <recommendedName>
        <fullName>Beta-glucuronidase</fullName>
        <ecNumber>3.2.1.31</ecNumber>
    </recommendedName>
</protein>